<organism>
    <name type="scientific">Oryza sativa subsp. japonica</name>
    <name type="common">Rice</name>
    <dbReference type="NCBI Taxonomy" id="39947"/>
    <lineage>
        <taxon>Eukaryota</taxon>
        <taxon>Viridiplantae</taxon>
        <taxon>Streptophyta</taxon>
        <taxon>Embryophyta</taxon>
        <taxon>Tracheophyta</taxon>
        <taxon>Spermatophyta</taxon>
        <taxon>Magnoliopsida</taxon>
        <taxon>Liliopsida</taxon>
        <taxon>Poales</taxon>
        <taxon>Poaceae</taxon>
        <taxon>BOP clade</taxon>
        <taxon>Oryzoideae</taxon>
        <taxon>Oryzeae</taxon>
        <taxon>Oryzinae</taxon>
        <taxon>Oryza</taxon>
        <taxon>Oryza sativa</taxon>
    </lineage>
</organism>
<evidence type="ECO:0000255" key="1"/>
<evidence type="ECO:0000255" key="2">
    <source>
        <dbReference type="PROSITE-ProRule" id="PRU00280"/>
    </source>
</evidence>
<evidence type="ECO:0000256" key="3">
    <source>
        <dbReference type="SAM" id="MobiDB-lite"/>
    </source>
</evidence>
<evidence type="ECO:0000269" key="4">
    <source>
    </source>
</evidence>
<evidence type="ECO:0000303" key="5">
    <source>
    </source>
</evidence>
<evidence type="ECO:0000305" key="6"/>
<evidence type="ECO:0000312" key="7">
    <source>
        <dbReference type="EMBL" id="BAS90429.1"/>
    </source>
</evidence>
<evidence type="ECO:0000312" key="8">
    <source>
        <dbReference type="EMBL" id="CAD41643.2"/>
    </source>
</evidence>
<evidence type="ECO:0000312" key="9">
    <source>
        <dbReference type="EMBL" id="EAZ31593.1"/>
    </source>
</evidence>
<sequence>MAASTRALFLSCFHGSGGGGGTSEVSRRLVLRPRYPSMPRRPRSAAVAGEGGEGGGGGGDGDLEAAAVGAEEEEKVAVFEVSGMTCAACAGSVEKAVKRLQGIHDAAVDVLGGRAQVVFYPAFVSEEKIRETIQDVGFEAKLIDEEVKEKNILVCRLHIKGMTCTSCASTVESILQVVPGVQRASVALATEEAEIRYDRRIVTASQLTHAVEETGFEAILITTGDDQSRIDLKVDGTLNERSIMIVKSSVQALPGVEDIKVDPELHKITISYKPDQTGPRDLIEVIESAASGDLTVSIYPEADGRQQHRHGEIKRYRQSFLWSLVFTIPVFLTSMVFMYIPGLKDGLEKKVINMMSIGELLRWILSTPVQFVIGRRFYTGAYKALSHGSSNMDVLIALGTNTAYFYSVYSILRAASSHNYMATDFFETSSMLISFILLGKYLEILAKGKTSEAIAKLMDLAPETATMLIYDHEGNVVGEKEIDSRLIQKNDVIKVVPGGKVASDGFVIWGQSHVNESMITGESRPVAKRKGDTVIGGTVNENGVLHVRATFVGSESALAQIVRLVESAQMAKAPVQKFADQISRVFVPLVIILSLLTWLAWFLAGRLHGYPNSWIPSSMDSFQLALQFGISVMVIACPCALGLATPTAVMVATGVGASQGVLIKGGQALESAQKVDCIVFDKTGTLTIGKPVVVNTRLLKNMVLREFYAYVAAAEVNSEHPLGKAVVEHAKKFHSEESHVWTEARDFISVTGHGVKAKISGRAVMVGNKSFMLTSGIDIPVEALEILTEEEEKAQTAIIVAMDQEVVGIISVSDPIKPNAREVISYLKSMKVESIMVTGDNWGTANAISKEVGIENTVAEAKPEQKAEKVKELQSAGRTVAMVGDGINDSPALVSADVGLAIGAGTDVAIEAADIVLMKSNLEDVITAIDLSRKTFFRIRMNYVWALGYNIIGIPIAAGVLFPSTRFRLPPWVAGAAMAASSVSVVCWSLLLRYYKSPKLGR</sequence>
<protein>
    <recommendedName>
        <fullName evidence="6">Copper-transporting ATPase HMA5</fullName>
        <ecNumber evidence="4">7.2.2.8</ecNumber>
    </recommendedName>
    <alternativeName>
        <fullName evidence="6">Protein HEAVY METAL ATPASE 5</fullName>
        <shortName evidence="5">OsHMA5</shortName>
    </alternativeName>
</protein>
<gene>
    <name evidence="5" type="primary">HMA5</name>
    <name evidence="7" type="ordered locus">Os04g0556000</name>
    <name evidence="6" type="ordered locus">LOC_Os04g46940</name>
    <name evidence="9" type="ORF">OsJ_15734</name>
    <name evidence="8" type="ORF">OSJNBb0012E24.8</name>
</gene>
<reference key="1">
    <citation type="journal article" date="2013" name="Plant Physiol.">
        <title>A member of the heavy metal P-type ATPase OsHMA5 is involved in xylem loading of copper in rice.</title>
        <authorList>
            <person name="Deng F."/>
            <person name="Yamaji N."/>
            <person name="Xia J."/>
            <person name="Ma J.F."/>
        </authorList>
    </citation>
    <scope>NUCLEOTIDE SEQUENCE [MRNA]</scope>
    <scope>FUNCTION</scope>
    <scope>SUBCELLULAR LOCATION</scope>
    <scope>TISSUE SPECIFICITY</scope>
    <scope>INDUCTION BY COPPER</scope>
    <scope>DISRUPTION PHENOTYPE</scope>
</reference>
<reference key="2">
    <citation type="journal article" date="2005" name="Nature">
        <title>The map-based sequence of the rice genome.</title>
        <authorList>
            <consortium name="International rice genome sequencing project (IRGSP)"/>
        </authorList>
    </citation>
    <scope>NUCLEOTIDE SEQUENCE [LARGE SCALE GENOMIC DNA]</scope>
    <source>
        <strain>cv. Nipponbare</strain>
    </source>
</reference>
<reference key="3">
    <citation type="journal article" date="2008" name="Nucleic Acids Res.">
        <title>The rice annotation project database (RAP-DB): 2008 update.</title>
        <authorList>
            <consortium name="The rice annotation project (RAP)"/>
        </authorList>
    </citation>
    <scope>GENOME REANNOTATION</scope>
    <source>
        <strain>cv. Nipponbare</strain>
    </source>
</reference>
<reference key="4">
    <citation type="journal article" date="2013" name="Rice">
        <title>Improvement of the Oryza sativa Nipponbare reference genome using next generation sequence and optical map data.</title>
        <authorList>
            <person name="Kawahara Y."/>
            <person name="de la Bastide M."/>
            <person name="Hamilton J.P."/>
            <person name="Kanamori H."/>
            <person name="McCombie W.R."/>
            <person name="Ouyang S."/>
            <person name="Schwartz D.C."/>
            <person name="Tanaka T."/>
            <person name="Wu J."/>
            <person name="Zhou S."/>
            <person name="Childs K.L."/>
            <person name="Davidson R.M."/>
            <person name="Lin H."/>
            <person name="Quesada-Ocampo L."/>
            <person name="Vaillancourt B."/>
            <person name="Sakai H."/>
            <person name="Lee S.S."/>
            <person name="Kim J."/>
            <person name="Numa H."/>
            <person name="Itoh T."/>
            <person name="Buell C.R."/>
            <person name="Matsumoto T."/>
        </authorList>
    </citation>
    <scope>GENOME REANNOTATION</scope>
    <source>
        <strain>cv. Nipponbare</strain>
    </source>
</reference>
<reference key="5">
    <citation type="journal article" date="2005" name="PLoS Biol.">
        <title>The genomes of Oryza sativa: a history of duplications.</title>
        <authorList>
            <person name="Yu J."/>
            <person name="Wang J."/>
            <person name="Lin W."/>
            <person name="Li S."/>
            <person name="Li H."/>
            <person name="Zhou J."/>
            <person name="Ni P."/>
            <person name="Dong W."/>
            <person name="Hu S."/>
            <person name="Zeng C."/>
            <person name="Zhang J."/>
            <person name="Zhang Y."/>
            <person name="Li R."/>
            <person name="Xu Z."/>
            <person name="Li S."/>
            <person name="Li X."/>
            <person name="Zheng H."/>
            <person name="Cong L."/>
            <person name="Lin L."/>
            <person name="Yin J."/>
            <person name="Geng J."/>
            <person name="Li G."/>
            <person name="Shi J."/>
            <person name="Liu J."/>
            <person name="Lv H."/>
            <person name="Li J."/>
            <person name="Wang J."/>
            <person name="Deng Y."/>
            <person name="Ran L."/>
            <person name="Shi X."/>
            <person name="Wang X."/>
            <person name="Wu Q."/>
            <person name="Li C."/>
            <person name="Ren X."/>
            <person name="Wang J."/>
            <person name="Wang X."/>
            <person name="Li D."/>
            <person name="Liu D."/>
            <person name="Zhang X."/>
            <person name="Ji Z."/>
            <person name="Zhao W."/>
            <person name="Sun Y."/>
            <person name="Zhang Z."/>
            <person name="Bao J."/>
            <person name="Han Y."/>
            <person name="Dong L."/>
            <person name="Ji J."/>
            <person name="Chen P."/>
            <person name="Wu S."/>
            <person name="Liu J."/>
            <person name="Xiao Y."/>
            <person name="Bu D."/>
            <person name="Tan J."/>
            <person name="Yang L."/>
            <person name="Ye C."/>
            <person name="Zhang J."/>
            <person name="Xu J."/>
            <person name="Zhou Y."/>
            <person name="Yu Y."/>
            <person name="Zhang B."/>
            <person name="Zhuang S."/>
            <person name="Wei H."/>
            <person name="Liu B."/>
            <person name="Lei M."/>
            <person name="Yu H."/>
            <person name="Li Y."/>
            <person name="Xu H."/>
            <person name="Wei S."/>
            <person name="He X."/>
            <person name="Fang L."/>
            <person name="Zhang Z."/>
            <person name="Zhang Y."/>
            <person name="Huang X."/>
            <person name="Su Z."/>
            <person name="Tong W."/>
            <person name="Li J."/>
            <person name="Tong Z."/>
            <person name="Li S."/>
            <person name="Ye J."/>
            <person name="Wang L."/>
            <person name="Fang L."/>
            <person name="Lei T."/>
            <person name="Chen C.-S."/>
            <person name="Chen H.-C."/>
            <person name="Xu Z."/>
            <person name="Li H."/>
            <person name="Huang H."/>
            <person name="Zhang F."/>
            <person name="Xu H."/>
            <person name="Li N."/>
            <person name="Zhao C."/>
            <person name="Li S."/>
            <person name="Dong L."/>
            <person name="Huang Y."/>
            <person name="Li L."/>
            <person name="Xi Y."/>
            <person name="Qi Q."/>
            <person name="Li W."/>
            <person name="Zhang B."/>
            <person name="Hu W."/>
            <person name="Zhang Y."/>
            <person name="Tian X."/>
            <person name="Jiao Y."/>
            <person name="Liang X."/>
            <person name="Jin J."/>
            <person name="Gao L."/>
            <person name="Zheng W."/>
            <person name="Hao B."/>
            <person name="Liu S.-M."/>
            <person name="Wang W."/>
            <person name="Yuan L."/>
            <person name="Cao M."/>
            <person name="McDermott J."/>
            <person name="Samudrala R."/>
            <person name="Wang J."/>
            <person name="Wong G.K.-S."/>
            <person name="Yang H."/>
        </authorList>
    </citation>
    <scope>NUCLEOTIDE SEQUENCE [LARGE SCALE GENOMIC DNA]</scope>
    <source>
        <strain>cv. Nipponbare</strain>
    </source>
</reference>
<feature type="chain" id="PRO_0000440966" description="Copper-transporting ATPase HMA5">
    <location>
        <begin position="1"/>
        <end position="1002"/>
    </location>
</feature>
<feature type="transmembrane region" description="Helical" evidence="1">
    <location>
        <begin position="320"/>
        <end position="340"/>
    </location>
</feature>
<feature type="transmembrane region" description="Helical" evidence="1">
    <location>
        <begin position="354"/>
        <end position="374"/>
    </location>
</feature>
<feature type="transmembrane region" description="Helical" evidence="1">
    <location>
        <begin position="392"/>
        <end position="412"/>
    </location>
</feature>
<feature type="transmembrane region" description="Helical" evidence="1">
    <location>
        <begin position="425"/>
        <end position="445"/>
    </location>
</feature>
<feature type="transmembrane region" description="Helical" evidence="1">
    <location>
        <begin position="585"/>
        <end position="605"/>
    </location>
</feature>
<feature type="transmembrane region" description="Helical" evidence="1">
    <location>
        <begin position="624"/>
        <end position="644"/>
    </location>
</feature>
<feature type="transmembrane region" description="Helical" evidence="1">
    <location>
        <begin position="943"/>
        <end position="963"/>
    </location>
</feature>
<feature type="transmembrane region" description="Helical" evidence="1">
    <location>
        <begin position="972"/>
        <end position="992"/>
    </location>
</feature>
<feature type="domain" description="HMA 1" evidence="2">
    <location>
        <begin position="75"/>
        <end position="141"/>
    </location>
</feature>
<feature type="domain" description="HMA 2" evidence="2">
    <location>
        <begin position="153"/>
        <end position="219"/>
    </location>
</feature>
<feature type="domain" description="HMA 3" evidence="2">
    <location>
        <begin position="228"/>
        <end position="294"/>
    </location>
</feature>
<feature type="region of interest" description="Disordered" evidence="3">
    <location>
        <begin position="32"/>
        <end position="63"/>
    </location>
</feature>
<feature type="compositionally biased region" description="Low complexity" evidence="3">
    <location>
        <begin position="32"/>
        <end position="48"/>
    </location>
</feature>
<feature type="compositionally biased region" description="Gly residues" evidence="3">
    <location>
        <begin position="49"/>
        <end position="60"/>
    </location>
</feature>
<feature type="binding site" evidence="2">
    <location>
        <position position="86"/>
    </location>
    <ligand>
        <name>Cu(+)</name>
        <dbReference type="ChEBI" id="CHEBI:49552"/>
        <label>1</label>
    </ligand>
</feature>
<feature type="binding site" evidence="2">
    <location>
        <position position="89"/>
    </location>
    <ligand>
        <name>Cu(+)</name>
        <dbReference type="ChEBI" id="CHEBI:49552"/>
        <label>1</label>
    </ligand>
</feature>
<feature type="binding site" evidence="2">
    <location>
        <position position="164"/>
    </location>
    <ligand>
        <name>Cu(+)</name>
        <dbReference type="ChEBI" id="CHEBI:49552"/>
        <label>2</label>
    </ligand>
</feature>
<feature type="binding site" evidence="2">
    <location>
        <position position="167"/>
    </location>
    <ligand>
        <name>Cu(+)</name>
        <dbReference type="ChEBI" id="CHEBI:49552"/>
        <label>2</label>
    </ligand>
</feature>
<dbReference type="EC" id="7.2.2.8" evidence="4"/>
<dbReference type="EMBL" id="AB840272">
    <property type="protein sequence ID" value="BAO05266.1"/>
    <property type="molecule type" value="mRNA"/>
</dbReference>
<dbReference type="EMBL" id="AL606647">
    <property type="protein sequence ID" value="CAD41643.2"/>
    <property type="status" value="ALT_SEQ"/>
    <property type="molecule type" value="Genomic_DNA"/>
</dbReference>
<dbReference type="EMBL" id="AP008210">
    <property type="protein sequence ID" value="BAF15436.2"/>
    <property type="status" value="ALT_SEQ"/>
    <property type="molecule type" value="Genomic_DNA"/>
</dbReference>
<dbReference type="EMBL" id="AP014960">
    <property type="protein sequence ID" value="BAS90429.1"/>
    <property type="molecule type" value="Genomic_DNA"/>
</dbReference>
<dbReference type="EMBL" id="CM000141">
    <property type="protein sequence ID" value="EAZ31593.1"/>
    <property type="molecule type" value="Genomic_DNA"/>
</dbReference>
<dbReference type="RefSeq" id="XP_015635938.1">
    <property type="nucleotide sequence ID" value="XM_015780452.1"/>
</dbReference>
<dbReference type="SMR" id="A3AWA4"/>
<dbReference type="FunCoup" id="A3AWA4">
    <property type="interactions" value="1552"/>
</dbReference>
<dbReference type="STRING" id="39947.A3AWA4"/>
<dbReference type="PaxDb" id="39947-A3AWA4"/>
<dbReference type="EnsemblPlants" id="Os04t0556000-01">
    <property type="protein sequence ID" value="Os04t0556000-01"/>
    <property type="gene ID" value="Os04g0556000"/>
</dbReference>
<dbReference type="Gramene" id="Os04t0556000-01">
    <property type="protein sequence ID" value="Os04t0556000-01"/>
    <property type="gene ID" value="Os04g0556000"/>
</dbReference>
<dbReference type="KEGG" id="dosa:Os04g0556000"/>
<dbReference type="eggNOG" id="KOG0207">
    <property type="taxonomic scope" value="Eukaryota"/>
</dbReference>
<dbReference type="HOGENOM" id="CLU_001771_0_2_1"/>
<dbReference type="InParanoid" id="A3AWA4"/>
<dbReference type="OMA" id="WECFFDE"/>
<dbReference type="OrthoDB" id="432719at2759"/>
<dbReference type="Proteomes" id="UP000000763">
    <property type="component" value="Chromosome 4"/>
</dbReference>
<dbReference type="Proteomes" id="UP000007752">
    <property type="component" value="Chromosome 4"/>
</dbReference>
<dbReference type="Proteomes" id="UP000059680">
    <property type="component" value="Chromosome 4"/>
</dbReference>
<dbReference type="ExpressionAtlas" id="A3AWA4">
    <property type="expression patterns" value="baseline and differential"/>
</dbReference>
<dbReference type="GO" id="GO:0005886">
    <property type="term" value="C:plasma membrane"/>
    <property type="evidence" value="ECO:0000318"/>
    <property type="project" value="GO_Central"/>
</dbReference>
<dbReference type="GO" id="GO:0005524">
    <property type="term" value="F:ATP binding"/>
    <property type="evidence" value="ECO:0007669"/>
    <property type="project" value="UniProtKB-KW"/>
</dbReference>
<dbReference type="GO" id="GO:0016887">
    <property type="term" value="F:ATP hydrolysis activity"/>
    <property type="evidence" value="ECO:0007669"/>
    <property type="project" value="InterPro"/>
</dbReference>
<dbReference type="GO" id="GO:0005507">
    <property type="term" value="F:copper ion binding"/>
    <property type="evidence" value="ECO:0000318"/>
    <property type="project" value="GO_Central"/>
</dbReference>
<dbReference type="GO" id="GO:0140581">
    <property type="term" value="F:P-type monovalent copper transporter activity"/>
    <property type="evidence" value="ECO:0007669"/>
    <property type="project" value="UniProtKB-EC"/>
</dbReference>
<dbReference type="GO" id="GO:0010273">
    <property type="term" value="P:detoxification of copper ion"/>
    <property type="evidence" value="ECO:0000318"/>
    <property type="project" value="GO_Central"/>
</dbReference>
<dbReference type="GO" id="GO:0055085">
    <property type="term" value="P:transmembrane transport"/>
    <property type="evidence" value="ECO:0000318"/>
    <property type="project" value="GO_Central"/>
</dbReference>
<dbReference type="CDD" id="cd00371">
    <property type="entry name" value="HMA"/>
    <property type="match status" value="3"/>
</dbReference>
<dbReference type="CDD" id="cd02094">
    <property type="entry name" value="P-type_ATPase_Cu-like"/>
    <property type="match status" value="1"/>
</dbReference>
<dbReference type="FunFam" id="3.30.70.100:FF:000001">
    <property type="entry name" value="ATPase copper transporting beta"/>
    <property type="match status" value="1"/>
</dbReference>
<dbReference type="FunFam" id="3.40.1110.10:FF:000038">
    <property type="entry name" value="Copper-exporting P-type ATPase"/>
    <property type="match status" value="1"/>
</dbReference>
<dbReference type="FunFam" id="2.70.150.10:FF:000002">
    <property type="entry name" value="Copper-transporting ATPase 1, putative"/>
    <property type="match status" value="1"/>
</dbReference>
<dbReference type="FunFam" id="3.30.70.100:FF:000033">
    <property type="entry name" value="Copper-transporting ATPase HMA5"/>
    <property type="match status" value="1"/>
</dbReference>
<dbReference type="FunFam" id="3.40.50.1000:FF:000031">
    <property type="entry name" value="Probable copper-transporting ATPase HMA5"/>
    <property type="match status" value="1"/>
</dbReference>
<dbReference type="FunFam" id="3.30.70.100:FF:000096">
    <property type="entry name" value="Putative ATP dependent copper transporter"/>
    <property type="match status" value="1"/>
</dbReference>
<dbReference type="Gene3D" id="3.30.70.100">
    <property type="match status" value="3"/>
</dbReference>
<dbReference type="Gene3D" id="3.40.1110.10">
    <property type="entry name" value="Calcium-transporting ATPase, cytoplasmic domain N"/>
    <property type="match status" value="2"/>
</dbReference>
<dbReference type="Gene3D" id="2.70.150.10">
    <property type="entry name" value="Calcium-transporting ATPase, cytoplasmic transduction domain A"/>
    <property type="match status" value="1"/>
</dbReference>
<dbReference type="Gene3D" id="3.40.50.1000">
    <property type="entry name" value="HAD superfamily/HAD-like"/>
    <property type="match status" value="1"/>
</dbReference>
<dbReference type="InterPro" id="IPR023299">
    <property type="entry name" value="ATPase_P-typ_cyto_dom_N"/>
</dbReference>
<dbReference type="InterPro" id="IPR018303">
    <property type="entry name" value="ATPase_P-typ_P_site"/>
</dbReference>
<dbReference type="InterPro" id="IPR023298">
    <property type="entry name" value="ATPase_P-typ_TM_dom_sf"/>
</dbReference>
<dbReference type="InterPro" id="IPR008250">
    <property type="entry name" value="ATPase_P-typ_transduc_dom_A_sf"/>
</dbReference>
<dbReference type="InterPro" id="IPR036412">
    <property type="entry name" value="HAD-like_sf"/>
</dbReference>
<dbReference type="InterPro" id="IPR023214">
    <property type="entry name" value="HAD_sf"/>
</dbReference>
<dbReference type="InterPro" id="IPR017969">
    <property type="entry name" value="Heavy-metal-associated_CS"/>
</dbReference>
<dbReference type="InterPro" id="IPR006122">
    <property type="entry name" value="HMA_Cu_ion-bd"/>
</dbReference>
<dbReference type="InterPro" id="IPR006121">
    <property type="entry name" value="HMA_dom"/>
</dbReference>
<dbReference type="InterPro" id="IPR036163">
    <property type="entry name" value="HMA_dom_sf"/>
</dbReference>
<dbReference type="InterPro" id="IPR027256">
    <property type="entry name" value="P-typ_ATPase_IB"/>
</dbReference>
<dbReference type="InterPro" id="IPR001757">
    <property type="entry name" value="P_typ_ATPase"/>
</dbReference>
<dbReference type="InterPro" id="IPR044492">
    <property type="entry name" value="P_typ_ATPase_HD_dom"/>
</dbReference>
<dbReference type="NCBIfam" id="TIGR01525">
    <property type="entry name" value="ATPase-IB_hvy"/>
    <property type="match status" value="1"/>
</dbReference>
<dbReference type="NCBIfam" id="TIGR01494">
    <property type="entry name" value="ATPase_P-type"/>
    <property type="match status" value="1"/>
</dbReference>
<dbReference type="NCBIfam" id="TIGR00003">
    <property type="entry name" value="copper ion binding protein"/>
    <property type="match status" value="2"/>
</dbReference>
<dbReference type="PANTHER" id="PTHR46594">
    <property type="entry name" value="P-TYPE CATION-TRANSPORTING ATPASE"/>
    <property type="match status" value="1"/>
</dbReference>
<dbReference type="PANTHER" id="PTHR46594:SF4">
    <property type="entry name" value="P-TYPE CATION-TRANSPORTING ATPASE"/>
    <property type="match status" value="1"/>
</dbReference>
<dbReference type="Pfam" id="PF00122">
    <property type="entry name" value="E1-E2_ATPase"/>
    <property type="match status" value="1"/>
</dbReference>
<dbReference type="Pfam" id="PF00403">
    <property type="entry name" value="HMA"/>
    <property type="match status" value="3"/>
</dbReference>
<dbReference type="Pfam" id="PF00702">
    <property type="entry name" value="Hydrolase"/>
    <property type="match status" value="1"/>
</dbReference>
<dbReference type="PRINTS" id="PR00119">
    <property type="entry name" value="CATATPASE"/>
</dbReference>
<dbReference type="PRINTS" id="PR00943">
    <property type="entry name" value="CUATPASE"/>
</dbReference>
<dbReference type="PRINTS" id="PR00942">
    <property type="entry name" value="CUATPASEI"/>
</dbReference>
<dbReference type="SFLD" id="SFLDG00002">
    <property type="entry name" value="C1.7:_P-type_atpase_like"/>
    <property type="match status" value="1"/>
</dbReference>
<dbReference type="SFLD" id="SFLDF00027">
    <property type="entry name" value="p-type_atpase"/>
    <property type="match status" value="1"/>
</dbReference>
<dbReference type="SUPFAM" id="SSF81653">
    <property type="entry name" value="Calcium ATPase, transduction domain A"/>
    <property type="match status" value="1"/>
</dbReference>
<dbReference type="SUPFAM" id="SSF81665">
    <property type="entry name" value="Calcium ATPase, transmembrane domain M"/>
    <property type="match status" value="1"/>
</dbReference>
<dbReference type="SUPFAM" id="SSF56784">
    <property type="entry name" value="HAD-like"/>
    <property type="match status" value="1"/>
</dbReference>
<dbReference type="SUPFAM" id="SSF55008">
    <property type="entry name" value="HMA, heavy metal-associated domain"/>
    <property type="match status" value="3"/>
</dbReference>
<dbReference type="PROSITE" id="PS00154">
    <property type="entry name" value="ATPASE_E1_E2"/>
    <property type="match status" value="1"/>
</dbReference>
<dbReference type="PROSITE" id="PS01047">
    <property type="entry name" value="HMA_1"/>
    <property type="match status" value="2"/>
</dbReference>
<dbReference type="PROSITE" id="PS50846">
    <property type="entry name" value="HMA_2"/>
    <property type="match status" value="3"/>
</dbReference>
<proteinExistence type="evidence at transcript level"/>
<name>HMA5_ORYSJ</name>
<comment type="function">
    <text evidence="4">Copper (Cu) transporter that plays an essential role in promoting translocation of Cu from roots to shoots. Involved in loading Cu to the xylem of the roots and other organs, including panicles.</text>
</comment>
<comment type="catalytic activity">
    <reaction evidence="4">
        <text>Cu(+)(in) + ATP + H2O = Cu(+)(out) + ADP + phosphate + H(+)</text>
        <dbReference type="Rhea" id="RHEA:25792"/>
        <dbReference type="ChEBI" id="CHEBI:15377"/>
        <dbReference type="ChEBI" id="CHEBI:15378"/>
        <dbReference type="ChEBI" id="CHEBI:30616"/>
        <dbReference type="ChEBI" id="CHEBI:43474"/>
        <dbReference type="ChEBI" id="CHEBI:49552"/>
        <dbReference type="ChEBI" id="CHEBI:456216"/>
        <dbReference type="EC" id="7.2.2.8"/>
    </reaction>
</comment>
<comment type="subcellular location">
    <subcellularLocation>
        <location evidence="4">Cell membrane</location>
        <topology evidence="1">Multi-pass membrane protein</topology>
    </subcellularLocation>
</comment>
<comment type="tissue specificity">
    <text evidence="4">Expressed in root pericycle cells, xylem region of diffuse vascular bundles in the first node, and vascular tissues of peduncle, rachis and husk.</text>
</comment>
<comment type="induction">
    <text evidence="4">Weakly induced by high copper concentration.</text>
</comment>
<comment type="disruption phenotype">
    <text evidence="4">Reduced grain yield. Increased levels of copper in roots. Decreased levels of copper in shoots and grains.</text>
</comment>
<comment type="similarity">
    <text evidence="6">Belongs to the cation transport ATPase (P-type) (TC 3.A.3) family. Type IB subfamily.</text>
</comment>
<comment type="sequence caution" evidence="6">
    <conflict type="erroneous gene model prediction">
        <sequence resource="EMBL-CDS" id="BAF15436"/>
    </conflict>
</comment>
<comment type="sequence caution" evidence="6">
    <conflict type="erroneous gene model prediction">
        <sequence resource="EMBL-CDS" id="CAD41643"/>
    </conflict>
</comment>
<keyword id="KW-0067">ATP-binding</keyword>
<keyword id="KW-1003">Cell membrane</keyword>
<keyword id="KW-0186">Copper</keyword>
<keyword id="KW-0406">Ion transport</keyword>
<keyword id="KW-0472">Membrane</keyword>
<keyword id="KW-0479">Metal-binding</keyword>
<keyword id="KW-0547">Nucleotide-binding</keyword>
<keyword id="KW-1185">Reference proteome</keyword>
<keyword id="KW-0677">Repeat</keyword>
<keyword id="KW-1278">Translocase</keyword>
<keyword id="KW-0812">Transmembrane</keyword>
<keyword id="KW-1133">Transmembrane helix</keyword>
<keyword id="KW-0813">Transport</keyword>
<accession>A3AWA4</accession>
<accession>Q0JB51</accession>
<accession>Q7XU05</accession>